<accession>Q3M929</accession>
<keyword id="KW-0342">GTP-binding</keyword>
<keyword id="KW-0547">Nucleotide-binding</keyword>
<keyword id="KW-0677">Repeat</keyword>
<keyword id="KW-0690">Ribosome biogenesis</keyword>
<comment type="function">
    <text evidence="1">GTPase that plays an essential role in the late steps of ribosome biogenesis.</text>
</comment>
<comment type="subunit">
    <text evidence="1">Associates with the 50S ribosomal subunit.</text>
</comment>
<comment type="similarity">
    <text evidence="1">Belongs to the TRAFAC class TrmE-Era-EngA-EngB-Septin-like GTPase superfamily. EngA (Der) GTPase family.</text>
</comment>
<feature type="chain" id="PRO_1000011555" description="GTPase Der">
    <location>
        <begin position="1"/>
        <end position="453"/>
    </location>
</feature>
<feature type="domain" description="EngA-type G 1">
    <location>
        <begin position="4"/>
        <end position="169"/>
    </location>
</feature>
<feature type="domain" description="EngA-type G 2">
    <location>
        <begin position="177"/>
        <end position="352"/>
    </location>
</feature>
<feature type="domain" description="KH-like" evidence="1">
    <location>
        <begin position="353"/>
        <end position="438"/>
    </location>
</feature>
<feature type="binding site" evidence="1">
    <location>
        <begin position="10"/>
        <end position="17"/>
    </location>
    <ligand>
        <name>GTP</name>
        <dbReference type="ChEBI" id="CHEBI:37565"/>
        <label>1</label>
    </ligand>
</feature>
<feature type="binding site" evidence="1">
    <location>
        <begin position="57"/>
        <end position="61"/>
    </location>
    <ligand>
        <name>GTP</name>
        <dbReference type="ChEBI" id="CHEBI:37565"/>
        <label>1</label>
    </ligand>
</feature>
<feature type="binding site" evidence="1">
    <location>
        <begin position="120"/>
        <end position="123"/>
    </location>
    <ligand>
        <name>GTP</name>
        <dbReference type="ChEBI" id="CHEBI:37565"/>
        <label>1</label>
    </ligand>
</feature>
<feature type="binding site" evidence="1">
    <location>
        <begin position="183"/>
        <end position="190"/>
    </location>
    <ligand>
        <name>GTP</name>
        <dbReference type="ChEBI" id="CHEBI:37565"/>
        <label>2</label>
    </ligand>
</feature>
<feature type="binding site" evidence="1">
    <location>
        <begin position="230"/>
        <end position="234"/>
    </location>
    <ligand>
        <name>GTP</name>
        <dbReference type="ChEBI" id="CHEBI:37565"/>
        <label>2</label>
    </ligand>
</feature>
<feature type="binding site" evidence="1">
    <location>
        <begin position="295"/>
        <end position="298"/>
    </location>
    <ligand>
        <name>GTP</name>
        <dbReference type="ChEBI" id="CHEBI:37565"/>
        <label>2</label>
    </ligand>
</feature>
<dbReference type="EMBL" id="CP000117">
    <property type="protein sequence ID" value="ABA22507.1"/>
    <property type="molecule type" value="Genomic_DNA"/>
</dbReference>
<dbReference type="SMR" id="Q3M929"/>
<dbReference type="STRING" id="240292.Ava_2896"/>
<dbReference type="KEGG" id="ava:Ava_2896"/>
<dbReference type="eggNOG" id="COG1160">
    <property type="taxonomic scope" value="Bacteria"/>
</dbReference>
<dbReference type="HOGENOM" id="CLU_016077_6_2_3"/>
<dbReference type="Proteomes" id="UP000002533">
    <property type="component" value="Chromosome"/>
</dbReference>
<dbReference type="GO" id="GO:0005525">
    <property type="term" value="F:GTP binding"/>
    <property type="evidence" value="ECO:0007669"/>
    <property type="project" value="UniProtKB-UniRule"/>
</dbReference>
<dbReference type="GO" id="GO:0043022">
    <property type="term" value="F:ribosome binding"/>
    <property type="evidence" value="ECO:0007669"/>
    <property type="project" value="TreeGrafter"/>
</dbReference>
<dbReference type="GO" id="GO:0042254">
    <property type="term" value="P:ribosome biogenesis"/>
    <property type="evidence" value="ECO:0007669"/>
    <property type="project" value="UniProtKB-KW"/>
</dbReference>
<dbReference type="CDD" id="cd01894">
    <property type="entry name" value="EngA1"/>
    <property type="match status" value="1"/>
</dbReference>
<dbReference type="CDD" id="cd01895">
    <property type="entry name" value="EngA2"/>
    <property type="match status" value="1"/>
</dbReference>
<dbReference type="FunFam" id="3.30.300.20:FF:000004">
    <property type="entry name" value="GTPase Der"/>
    <property type="match status" value="1"/>
</dbReference>
<dbReference type="FunFam" id="3.40.50.300:FF:000040">
    <property type="entry name" value="GTPase Der"/>
    <property type="match status" value="1"/>
</dbReference>
<dbReference type="FunFam" id="3.40.50.300:FF:001185">
    <property type="entry name" value="GTPase Der"/>
    <property type="match status" value="1"/>
</dbReference>
<dbReference type="Gene3D" id="3.30.300.20">
    <property type="match status" value="1"/>
</dbReference>
<dbReference type="Gene3D" id="3.40.50.300">
    <property type="entry name" value="P-loop containing nucleotide triphosphate hydrolases"/>
    <property type="match status" value="2"/>
</dbReference>
<dbReference type="HAMAP" id="MF_00195">
    <property type="entry name" value="GTPase_Der"/>
    <property type="match status" value="1"/>
</dbReference>
<dbReference type="InterPro" id="IPR031166">
    <property type="entry name" value="G_ENGA"/>
</dbReference>
<dbReference type="InterPro" id="IPR006073">
    <property type="entry name" value="GTP-bd"/>
</dbReference>
<dbReference type="InterPro" id="IPR016484">
    <property type="entry name" value="GTPase_Der"/>
</dbReference>
<dbReference type="InterPro" id="IPR032859">
    <property type="entry name" value="KH_dom-like"/>
</dbReference>
<dbReference type="InterPro" id="IPR015946">
    <property type="entry name" value="KH_dom-like_a/b"/>
</dbReference>
<dbReference type="InterPro" id="IPR027417">
    <property type="entry name" value="P-loop_NTPase"/>
</dbReference>
<dbReference type="InterPro" id="IPR005225">
    <property type="entry name" value="Small_GTP-bd"/>
</dbReference>
<dbReference type="NCBIfam" id="TIGR03594">
    <property type="entry name" value="GTPase_EngA"/>
    <property type="match status" value="1"/>
</dbReference>
<dbReference type="NCBIfam" id="TIGR00231">
    <property type="entry name" value="small_GTP"/>
    <property type="match status" value="2"/>
</dbReference>
<dbReference type="PANTHER" id="PTHR43834">
    <property type="entry name" value="GTPASE DER"/>
    <property type="match status" value="1"/>
</dbReference>
<dbReference type="PANTHER" id="PTHR43834:SF6">
    <property type="entry name" value="GTPASE DER"/>
    <property type="match status" value="1"/>
</dbReference>
<dbReference type="Pfam" id="PF14714">
    <property type="entry name" value="KH_dom-like"/>
    <property type="match status" value="1"/>
</dbReference>
<dbReference type="Pfam" id="PF01926">
    <property type="entry name" value="MMR_HSR1"/>
    <property type="match status" value="2"/>
</dbReference>
<dbReference type="PIRSF" id="PIRSF006485">
    <property type="entry name" value="GTP-binding_EngA"/>
    <property type="match status" value="1"/>
</dbReference>
<dbReference type="PRINTS" id="PR00326">
    <property type="entry name" value="GTP1OBG"/>
</dbReference>
<dbReference type="SUPFAM" id="SSF52540">
    <property type="entry name" value="P-loop containing nucleoside triphosphate hydrolases"/>
    <property type="match status" value="2"/>
</dbReference>
<dbReference type="PROSITE" id="PS51712">
    <property type="entry name" value="G_ENGA"/>
    <property type="match status" value="2"/>
</dbReference>
<sequence>MGLPIVAIIGRPNVGKSTLVNRLAGEQTAIVHDEPGVTRDRTYLPAYWSDREFQVVDTGGLVFNDDTEFLPLIRQQALAALHEASAAIFVVNGQTGPNSADEEIAEWLRQQPVPVFLAVNKCESPDQGSIQASEFWELGLGEPYPISAIHGNGTGELLDELIKHLPPTTELEENNEIKIAIIGRPNVGKSSLLNAFAGEERVIVSPISGTTRDAIDTFIERNGQNYRLIDTAGIRKKKSIDYGTEFFSINRAFKAIRRADVVLLVIDALDGVTEQDQKLAGRILDEGKACVVVVNKWDAVEKDSYTIYDYEKNLEARLHFTEWADTIYVSAVTGQRVEKILELVTKANEEHKRRVSTSVINEVLEDAVSWHSPPTSRGGRQGRIYYGTQVSTQPPTIALFVNEAKRFNDNYRRYIERQFRQQLGFKGTPIRLLWRSKKVRDVESGSANRATRV</sequence>
<protein>
    <recommendedName>
        <fullName evidence="1">GTPase Der</fullName>
    </recommendedName>
    <alternativeName>
        <fullName evidence="1">GTP-binding protein EngA</fullName>
    </alternativeName>
</protein>
<name>DER_TRIV2</name>
<reference key="1">
    <citation type="journal article" date="2014" name="Stand. Genomic Sci.">
        <title>Complete genome sequence of Anabaena variabilis ATCC 29413.</title>
        <authorList>
            <person name="Thiel T."/>
            <person name="Pratte B.S."/>
            <person name="Zhong J."/>
            <person name="Goodwin L."/>
            <person name="Copeland A."/>
            <person name="Lucas S."/>
            <person name="Han C."/>
            <person name="Pitluck S."/>
            <person name="Land M.L."/>
            <person name="Kyrpides N.C."/>
            <person name="Woyke T."/>
        </authorList>
    </citation>
    <scope>NUCLEOTIDE SEQUENCE [LARGE SCALE GENOMIC DNA]</scope>
    <source>
        <strain>ATCC 29413 / PCC 7937</strain>
    </source>
</reference>
<organism>
    <name type="scientific">Trichormus variabilis (strain ATCC 29413 / PCC 7937)</name>
    <name type="common">Anabaena variabilis</name>
    <dbReference type="NCBI Taxonomy" id="240292"/>
    <lineage>
        <taxon>Bacteria</taxon>
        <taxon>Bacillati</taxon>
        <taxon>Cyanobacteriota</taxon>
        <taxon>Cyanophyceae</taxon>
        <taxon>Nostocales</taxon>
        <taxon>Nostocaceae</taxon>
        <taxon>Trichormus</taxon>
    </lineage>
</organism>
<gene>
    <name evidence="1" type="primary">der</name>
    <name type="synonym">engA</name>
    <name type="ordered locus">Ava_2896</name>
</gene>
<proteinExistence type="inferred from homology"/>
<evidence type="ECO:0000255" key="1">
    <source>
        <dbReference type="HAMAP-Rule" id="MF_00195"/>
    </source>
</evidence>